<name>RL27_SYNP6</name>
<reference key="1">
    <citation type="journal article" date="2007" name="Photosyn. Res.">
        <title>Complete nucleotide sequence of the freshwater unicellular cyanobacterium Synechococcus elongatus PCC 6301 chromosome: gene content and organization.</title>
        <authorList>
            <person name="Sugita C."/>
            <person name="Ogata K."/>
            <person name="Shikata M."/>
            <person name="Jikuya H."/>
            <person name="Takano J."/>
            <person name="Furumichi M."/>
            <person name="Kanehisa M."/>
            <person name="Omata T."/>
            <person name="Sugiura M."/>
            <person name="Sugita M."/>
        </authorList>
    </citation>
    <scope>NUCLEOTIDE SEQUENCE [LARGE SCALE GENOMIC DNA]</scope>
    <source>
        <strain>ATCC 27144 / PCC 6301 / SAUG 1402/1</strain>
    </source>
</reference>
<sequence length="88" mass="9227">MAHKKGTGSTRNGRDSNAQRLGVKKFGGEVVRSGSIIVRQRGTKFHPGVNVGRGGDDTLFALIDGVVTFERKGKGGKKVSVYPAGEAA</sequence>
<comment type="similarity">
    <text evidence="1">Belongs to the bacterial ribosomal protein bL27 family.</text>
</comment>
<organism>
    <name type="scientific">Synechococcus sp. (strain ATCC 27144 / PCC 6301 / SAUG 1402/1)</name>
    <name type="common">Anacystis nidulans</name>
    <dbReference type="NCBI Taxonomy" id="269084"/>
    <lineage>
        <taxon>Bacteria</taxon>
        <taxon>Bacillati</taxon>
        <taxon>Cyanobacteriota</taxon>
        <taxon>Cyanophyceae</taxon>
        <taxon>Synechococcales</taxon>
        <taxon>Synechococcaceae</taxon>
        <taxon>Synechococcus</taxon>
    </lineage>
</organism>
<proteinExistence type="inferred from homology"/>
<keyword id="KW-0687">Ribonucleoprotein</keyword>
<keyword id="KW-0689">Ribosomal protein</keyword>
<accession>Q5N598</accession>
<dbReference type="EMBL" id="AP008231">
    <property type="protein sequence ID" value="BAD78520.1"/>
    <property type="molecule type" value="Genomic_DNA"/>
</dbReference>
<dbReference type="RefSeq" id="WP_011242644.1">
    <property type="nucleotide sequence ID" value="NZ_CP085785.1"/>
</dbReference>
<dbReference type="SMR" id="Q5N598"/>
<dbReference type="GeneID" id="72430079"/>
<dbReference type="KEGG" id="syc:syc0330_c"/>
<dbReference type="eggNOG" id="COG0211">
    <property type="taxonomic scope" value="Bacteria"/>
</dbReference>
<dbReference type="Proteomes" id="UP000001175">
    <property type="component" value="Chromosome"/>
</dbReference>
<dbReference type="GO" id="GO:0022625">
    <property type="term" value="C:cytosolic large ribosomal subunit"/>
    <property type="evidence" value="ECO:0007669"/>
    <property type="project" value="TreeGrafter"/>
</dbReference>
<dbReference type="GO" id="GO:0003735">
    <property type="term" value="F:structural constituent of ribosome"/>
    <property type="evidence" value="ECO:0007669"/>
    <property type="project" value="InterPro"/>
</dbReference>
<dbReference type="GO" id="GO:0006412">
    <property type="term" value="P:translation"/>
    <property type="evidence" value="ECO:0007669"/>
    <property type="project" value="UniProtKB-UniRule"/>
</dbReference>
<dbReference type="FunFam" id="2.40.50.100:FF:000004">
    <property type="entry name" value="50S ribosomal protein L27"/>
    <property type="match status" value="1"/>
</dbReference>
<dbReference type="Gene3D" id="2.40.50.100">
    <property type="match status" value="1"/>
</dbReference>
<dbReference type="HAMAP" id="MF_00539">
    <property type="entry name" value="Ribosomal_bL27"/>
    <property type="match status" value="1"/>
</dbReference>
<dbReference type="InterPro" id="IPR001684">
    <property type="entry name" value="Ribosomal_bL27"/>
</dbReference>
<dbReference type="InterPro" id="IPR018261">
    <property type="entry name" value="Ribosomal_bL27_CS"/>
</dbReference>
<dbReference type="NCBIfam" id="TIGR00062">
    <property type="entry name" value="L27"/>
    <property type="match status" value="1"/>
</dbReference>
<dbReference type="PANTHER" id="PTHR15893:SF0">
    <property type="entry name" value="LARGE RIBOSOMAL SUBUNIT PROTEIN BL27M"/>
    <property type="match status" value="1"/>
</dbReference>
<dbReference type="PANTHER" id="PTHR15893">
    <property type="entry name" value="RIBOSOMAL PROTEIN L27"/>
    <property type="match status" value="1"/>
</dbReference>
<dbReference type="Pfam" id="PF01016">
    <property type="entry name" value="Ribosomal_L27"/>
    <property type="match status" value="1"/>
</dbReference>
<dbReference type="PRINTS" id="PR00063">
    <property type="entry name" value="RIBOSOMALL27"/>
</dbReference>
<dbReference type="SUPFAM" id="SSF110324">
    <property type="entry name" value="Ribosomal L27 protein-like"/>
    <property type="match status" value="1"/>
</dbReference>
<dbReference type="PROSITE" id="PS00831">
    <property type="entry name" value="RIBOSOMAL_L27"/>
    <property type="match status" value="1"/>
</dbReference>
<gene>
    <name evidence="1" type="primary">rpmA</name>
    <name evidence="1" type="synonym">rpl27</name>
    <name type="ordered locus">syc0330_c</name>
</gene>
<feature type="chain" id="PRO_0000181188" description="Large ribosomal subunit protein bL27">
    <location>
        <begin position="1"/>
        <end position="88"/>
    </location>
</feature>
<feature type="region of interest" description="Disordered" evidence="2">
    <location>
        <begin position="1"/>
        <end position="23"/>
    </location>
</feature>
<feature type="compositionally biased region" description="Polar residues" evidence="2">
    <location>
        <begin position="7"/>
        <end position="19"/>
    </location>
</feature>
<evidence type="ECO:0000255" key="1">
    <source>
        <dbReference type="HAMAP-Rule" id="MF_00539"/>
    </source>
</evidence>
<evidence type="ECO:0000256" key="2">
    <source>
        <dbReference type="SAM" id="MobiDB-lite"/>
    </source>
</evidence>
<evidence type="ECO:0000305" key="3"/>
<protein>
    <recommendedName>
        <fullName evidence="1">Large ribosomal subunit protein bL27</fullName>
    </recommendedName>
    <alternativeName>
        <fullName evidence="3">50S ribosomal protein L27</fullName>
    </alternativeName>
</protein>